<protein>
    <recommendedName>
        <fullName evidence="1">Large ribosomal subunit protein bL12</fullName>
    </recommendedName>
    <alternativeName>
        <fullName evidence="2">50S ribosomal protein L7/L12</fullName>
    </alternativeName>
</protein>
<accession>B3R7T7</accession>
<feature type="chain" id="PRO_1000121420" description="Large ribosomal subunit protein bL12">
    <location>
        <begin position="1"/>
        <end position="124"/>
    </location>
</feature>
<name>RL7_CUPTR</name>
<keyword id="KW-0687">Ribonucleoprotein</keyword>
<keyword id="KW-0689">Ribosomal protein</keyword>
<sequence>MAITKDDILEAVGAMSVMELNDLVKAFEEKFGVSAAAMAVAAAPGAAGAAAAEEQTEFNVILAEVGANKVGVIKAVREITGLGLKEAKDLVDGAPKPVKEGVDKAAAAEAKKKLEDAGAKVDVK</sequence>
<reference key="1">
    <citation type="journal article" date="2008" name="Genome Res.">
        <title>Genome sequence of the beta-rhizobium Cupriavidus taiwanensis and comparative genomics of rhizobia.</title>
        <authorList>
            <person name="Amadou C."/>
            <person name="Pascal G."/>
            <person name="Mangenot S."/>
            <person name="Glew M."/>
            <person name="Bontemps C."/>
            <person name="Capela D."/>
            <person name="Carrere S."/>
            <person name="Cruveiller S."/>
            <person name="Dossat C."/>
            <person name="Lajus A."/>
            <person name="Marchetti M."/>
            <person name="Poinsot V."/>
            <person name="Rouy Z."/>
            <person name="Servin B."/>
            <person name="Saad M."/>
            <person name="Schenowitz C."/>
            <person name="Barbe V."/>
            <person name="Batut J."/>
            <person name="Medigue C."/>
            <person name="Masson-Boivin C."/>
        </authorList>
    </citation>
    <scope>NUCLEOTIDE SEQUENCE [LARGE SCALE GENOMIC DNA]</scope>
    <source>
        <strain>DSM 17343 / BCRC 17206 / CCUG 44338 / CIP 107171 / LMG 19424 / R1</strain>
    </source>
</reference>
<dbReference type="EMBL" id="CU633749">
    <property type="protein sequence ID" value="CAQ70882.1"/>
    <property type="molecule type" value="Genomic_DNA"/>
</dbReference>
<dbReference type="RefSeq" id="WP_012354151.1">
    <property type="nucleotide sequence ID" value="NC_010528.1"/>
</dbReference>
<dbReference type="SMR" id="B3R7T7"/>
<dbReference type="GeneID" id="29761607"/>
<dbReference type="KEGG" id="cti:RALTA_A2960"/>
<dbReference type="eggNOG" id="COG0222">
    <property type="taxonomic scope" value="Bacteria"/>
</dbReference>
<dbReference type="HOGENOM" id="CLU_086499_3_2_4"/>
<dbReference type="BioCyc" id="CTAI977880:RALTA_RS14425-MONOMER"/>
<dbReference type="Proteomes" id="UP000001692">
    <property type="component" value="Chromosome 1"/>
</dbReference>
<dbReference type="GO" id="GO:0022625">
    <property type="term" value="C:cytosolic large ribosomal subunit"/>
    <property type="evidence" value="ECO:0007669"/>
    <property type="project" value="TreeGrafter"/>
</dbReference>
<dbReference type="GO" id="GO:0003729">
    <property type="term" value="F:mRNA binding"/>
    <property type="evidence" value="ECO:0007669"/>
    <property type="project" value="TreeGrafter"/>
</dbReference>
<dbReference type="GO" id="GO:0003735">
    <property type="term" value="F:structural constituent of ribosome"/>
    <property type="evidence" value="ECO:0007669"/>
    <property type="project" value="InterPro"/>
</dbReference>
<dbReference type="GO" id="GO:0006412">
    <property type="term" value="P:translation"/>
    <property type="evidence" value="ECO:0007669"/>
    <property type="project" value="UniProtKB-UniRule"/>
</dbReference>
<dbReference type="CDD" id="cd00387">
    <property type="entry name" value="Ribosomal_L7_L12"/>
    <property type="match status" value="1"/>
</dbReference>
<dbReference type="FunFam" id="3.30.1390.10:FF:000001">
    <property type="entry name" value="50S ribosomal protein L7/L12"/>
    <property type="match status" value="1"/>
</dbReference>
<dbReference type="Gene3D" id="3.30.1390.10">
    <property type="match status" value="1"/>
</dbReference>
<dbReference type="Gene3D" id="1.20.5.710">
    <property type="entry name" value="Single helix bin"/>
    <property type="match status" value="1"/>
</dbReference>
<dbReference type="HAMAP" id="MF_00368">
    <property type="entry name" value="Ribosomal_bL12"/>
    <property type="match status" value="1"/>
</dbReference>
<dbReference type="InterPro" id="IPR000206">
    <property type="entry name" value="Ribosomal_bL12"/>
</dbReference>
<dbReference type="InterPro" id="IPR013823">
    <property type="entry name" value="Ribosomal_bL12_C"/>
</dbReference>
<dbReference type="InterPro" id="IPR014719">
    <property type="entry name" value="Ribosomal_bL12_C/ClpS-like"/>
</dbReference>
<dbReference type="InterPro" id="IPR008932">
    <property type="entry name" value="Ribosomal_bL12_oligo"/>
</dbReference>
<dbReference type="InterPro" id="IPR036235">
    <property type="entry name" value="Ribosomal_bL12_oligo_N_sf"/>
</dbReference>
<dbReference type="NCBIfam" id="TIGR00855">
    <property type="entry name" value="L12"/>
    <property type="match status" value="1"/>
</dbReference>
<dbReference type="PANTHER" id="PTHR45987">
    <property type="entry name" value="39S RIBOSOMAL PROTEIN L12"/>
    <property type="match status" value="1"/>
</dbReference>
<dbReference type="PANTHER" id="PTHR45987:SF4">
    <property type="entry name" value="LARGE RIBOSOMAL SUBUNIT PROTEIN BL12M"/>
    <property type="match status" value="1"/>
</dbReference>
<dbReference type="Pfam" id="PF00542">
    <property type="entry name" value="Ribosomal_L12"/>
    <property type="match status" value="1"/>
</dbReference>
<dbReference type="Pfam" id="PF16320">
    <property type="entry name" value="Ribosomal_L12_N"/>
    <property type="match status" value="1"/>
</dbReference>
<dbReference type="SUPFAM" id="SSF54736">
    <property type="entry name" value="ClpS-like"/>
    <property type="match status" value="1"/>
</dbReference>
<dbReference type="SUPFAM" id="SSF48300">
    <property type="entry name" value="Ribosomal protein L7/12, oligomerisation (N-terminal) domain"/>
    <property type="match status" value="1"/>
</dbReference>
<organism>
    <name type="scientific">Cupriavidus taiwanensis (strain DSM 17343 / BCRC 17206 / CCUG 44338 / CIP 107171 / LMG 19424 / R1)</name>
    <name type="common">Ralstonia taiwanensis (strain LMG 19424)</name>
    <dbReference type="NCBI Taxonomy" id="977880"/>
    <lineage>
        <taxon>Bacteria</taxon>
        <taxon>Pseudomonadati</taxon>
        <taxon>Pseudomonadota</taxon>
        <taxon>Betaproteobacteria</taxon>
        <taxon>Burkholderiales</taxon>
        <taxon>Burkholderiaceae</taxon>
        <taxon>Cupriavidus</taxon>
    </lineage>
</organism>
<proteinExistence type="inferred from homology"/>
<evidence type="ECO:0000255" key="1">
    <source>
        <dbReference type="HAMAP-Rule" id="MF_00368"/>
    </source>
</evidence>
<evidence type="ECO:0000305" key="2"/>
<gene>
    <name evidence="1" type="primary">rplL</name>
    <name type="ordered locus">RALTA_A2960</name>
</gene>
<comment type="function">
    <text evidence="1">Forms part of the ribosomal stalk which helps the ribosome interact with GTP-bound translation factors. Is thus essential for accurate translation.</text>
</comment>
<comment type="subunit">
    <text evidence="1">Homodimer. Part of the ribosomal stalk of the 50S ribosomal subunit. Forms a multimeric L10(L12)X complex, where L10 forms an elongated spine to which 2 to 4 L12 dimers bind in a sequential fashion. Binds GTP-bound translation factors.</text>
</comment>
<comment type="similarity">
    <text evidence="1">Belongs to the bacterial ribosomal protein bL12 family.</text>
</comment>